<comment type="function">
    <text evidence="1">Toxic component of a type II toxin-antitoxin (TA) system. Its cognate antitoxin is VapB29. Has ribonuclease activity (By similarity).</text>
</comment>
<comment type="cofactor">
    <cofactor evidence="2">
        <name>Mg(2+)</name>
        <dbReference type="ChEBI" id="CHEBI:18420"/>
    </cofactor>
</comment>
<comment type="similarity">
    <text evidence="2">Belongs to the PINc/VapC protein family.</text>
</comment>
<proteinExistence type="inferred from homology"/>
<dbReference type="EC" id="3.1.-.-" evidence="2"/>
<dbReference type="EMBL" id="AE000516">
    <property type="protein sequence ID" value="AAK44871.1"/>
    <property type="molecule type" value="Genomic_DNA"/>
</dbReference>
<dbReference type="PIR" id="D70911">
    <property type="entry name" value="D70911"/>
</dbReference>
<dbReference type="RefSeq" id="WP_003403218.1">
    <property type="nucleotide sequence ID" value="NZ_KK341227.1"/>
</dbReference>
<dbReference type="SMR" id="P9WF78"/>
<dbReference type="GeneID" id="45424579"/>
<dbReference type="KEGG" id="mtc:MT0646"/>
<dbReference type="PATRIC" id="fig|83331.31.peg.684"/>
<dbReference type="HOGENOM" id="CLU_145365_0_0_11"/>
<dbReference type="Proteomes" id="UP000001020">
    <property type="component" value="Chromosome"/>
</dbReference>
<dbReference type="GO" id="GO:0000287">
    <property type="term" value="F:magnesium ion binding"/>
    <property type="evidence" value="ECO:0007669"/>
    <property type="project" value="UniProtKB-UniRule"/>
</dbReference>
<dbReference type="GO" id="GO:0004540">
    <property type="term" value="F:RNA nuclease activity"/>
    <property type="evidence" value="ECO:0007669"/>
    <property type="project" value="InterPro"/>
</dbReference>
<dbReference type="GO" id="GO:0045926">
    <property type="term" value="P:negative regulation of growth"/>
    <property type="evidence" value="ECO:0007669"/>
    <property type="project" value="UniProtKB-ARBA"/>
</dbReference>
<dbReference type="Gene3D" id="3.40.50.1010">
    <property type="entry name" value="5'-nuclease"/>
    <property type="match status" value="1"/>
</dbReference>
<dbReference type="HAMAP" id="MF_00265">
    <property type="entry name" value="VapC_Nob1"/>
    <property type="match status" value="1"/>
</dbReference>
<dbReference type="InterPro" id="IPR006226">
    <property type="entry name" value="Mtu_PIN"/>
</dbReference>
<dbReference type="InterPro" id="IPR029060">
    <property type="entry name" value="PIN-like_dom_sf"/>
</dbReference>
<dbReference type="InterPro" id="IPR002716">
    <property type="entry name" value="PIN_dom"/>
</dbReference>
<dbReference type="InterPro" id="IPR022907">
    <property type="entry name" value="VapC_family"/>
</dbReference>
<dbReference type="NCBIfam" id="TIGR00028">
    <property type="entry name" value="Mtu_PIN_fam"/>
    <property type="match status" value="1"/>
</dbReference>
<dbReference type="Pfam" id="PF01850">
    <property type="entry name" value="PIN"/>
    <property type="match status" value="1"/>
</dbReference>
<dbReference type="SUPFAM" id="SSF88723">
    <property type="entry name" value="PIN domain-like"/>
    <property type="match status" value="1"/>
</dbReference>
<sequence>MTVLLDANVLIALVVAEHVHHDAAADWLMASDTGFATCPMTQGSLVRFLVRSGQSAAAARDVVSAVQCTSRHEFWPDALSFAGVEVAGVVGHRQVTDAYLAQLARSHDGQLATLDSGLAHLHGDVAVLIPTTT</sequence>
<accession>P9WF78</accession>
<accession>L0T729</accession>
<accession>O07760</accession>
<accession>Q7D9I9</accession>
<name>VPC29_MYCTO</name>
<evidence type="ECO:0000250" key="1"/>
<evidence type="ECO:0000255" key="2">
    <source>
        <dbReference type="HAMAP-Rule" id="MF_00265"/>
    </source>
</evidence>
<keyword id="KW-0378">Hydrolase</keyword>
<keyword id="KW-0460">Magnesium</keyword>
<keyword id="KW-0479">Metal-binding</keyword>
<keyword id="KW-0540">Nuclease</keyword>
<keyword id="KW-1185">Reference proteome</keyword>
<keyword id="KW-1277">Toxin-antitoxin system</keyword>
<feature type="chain" id="PRO_0000428586" description="Ribonuclease VapC29">
    <location>
        <begin position="1"/>
        <end position="133"/>
    </location>
</feature>
<feature type="domain" description="PINc" evidence="2">
    <location>
        <begin position="3"/>
        <end position="122"/>
    </location>
</feature>
<feature type="binding site" evidence="2">
    <location>
        <position position="6"/>
    </location>
    <ligand>
        <name>Mg(2+)</name>
        <dbReference type="ChEBI" id="CHEBI:18420"/>
    </ligand>
</feature>
<feature type="binding site" evidence="2">
    <location>
        <position position="97"/>
    </location>
    <ligand>
        <name>Mg(2+)</name>
        <dbReference type="ChEBI" id="CHEBI:18420"/>
    </ligand>
</feature>
<reference key="1">
    <citation type="journal article" date="2002" name="J. Bacteriol.">
        <title>Whole-genome comparison of Mycobacterium tuberculosis clinical and laboratory strains.</title>
        <authorList>
            <person name="Fleischmann R.D."/>
            <person name="Alland D."/>
            <person name="Eisen J.A."/>
            <person name="Carpenter L."/>
            <person name="White O."/>
            <person name="Peterson J.D."/>
            <person name="DeBoy R.T."/>
            <person name="Dodson R.J."/>
            <person name="Gwinn M.L."/>
            <person name="Haft D.H."/>
            <person name="Hickey E.K."/>
            <person name="Kolonay J.F."/>
            <person name="Nelson W.C."/>
            <person name="Umayam L.A."/>
            <person name="Ermolaeva M.D."/>
            <person name="Salzberg S.L."/>
            <person name="Delcher A."/>
            <person name="Utterback T.R."/>
            <person name="Weidman J.F."/>
            <person name="Khouri H.M."/>
            <person name="Gill J."/>
            <person name="Mikula A."/>
            <person name="Bishai W."/>
            <person name="Jacobs W.R. Jr."/>
            <person name="Venter J.C."/>
            <person name="Fraser C.M."/>
        </authorList>
    </citation>
    <scope>NUCLEOTIDE SEQUENCE [LARGE SCALE GENOMIC DNA]</scope>
    <source>
        <strain>CDC 1551 / Oshkosh</strain>
    </source>
</reference>
<organism>
    <name type="scientific">Mycobacterium tuberculosis (strain CDC 1551 / Oshkosh)</name>
    <dbReference type="NCBI Taxonomy" id="83331"/>
    <lineage>
        <taxon>Bacteria</taxon>
        <taxon>Bacillati</taxon>
        <taxon>Actinomycetota</taxon>
        <taxon>Actinomycetes</taxon>
        <taxon>Mycobacteriales</taxon>
        <taxon>Mycobacteriaceae</taxon>
        <taxon>Mycobacterium</taxon>
        <taxon>Mycobacterium tuberculosis complex</taxon>
    </lineage>
</organism>
<gene>
    <name evidence="2" type="primary">vapC29</name>
    <name type="ordered locus">MT0646</name>
</gene>
<protein>
    <recommendedName>
        <fullName evidence="2">Ribonuclease VapC29</fullName>
        <shortName evidence="2">RNase VapC29</shortName>
        <ecNumber evidence="2">3.1.-.-</ecNumber>
    </recommendedName>
    <alternativeName>
        <fullName evidence="2">Toxin VapC29</fullName>
    </alternativeName>
</protein>